<accession>D3YU32</accession>
<name>T13C1_MOUSE</name>
<protein>
    <recommendedName>
        <fullName evidence="3">Testis-expressed protein 13C-1</fullName>
    </recommendedName>
    <alternativeName>
        <fullName evidence="4">TEX13 family member C-1</fullName>
    </alternativeName>
</protein>
<gene>
    <name evidence="4" type="primary">Tex13c1</name>
    <name evidence="4" type="synonym">Gm362</name>
</gene>
<proteinExistence type="evidence at transcript level"/>
<organism>
    <name type="scientific">Mus musculus</name>
    <name type="common">Mouse</name>
    <dbReference type="NCBI Taxonomy" id="10090"/>
    <lineage>
        <taxon>Eukaryota</taxon>
        <taxon>Metazoa</taxon>
        <taxon>Chordata</taxon>
        <taxon>Craniata</taxon>
        <taxon>Vertebrata</taxon>
        <taxon>Euteleostomi</taxon>
        <taxon>Mammalia</taxon>
        <taxon>Eutheria</taxon>
        <taxon>Euarchontoglires</taxon>
        <taxon>Glires</taxon>
        <taxon>Rodentia</taxon>
        <taxon>Myomorpha</taxon>
        <taxon>Muroidea</taxon>
        <taxon>Muridae</taxon>
        <taxon>Murinae</taxon>
        <taxon>Mus</taxon>
        <taxon>Mus</taxon>
    </lineage>
</organism>
<keyword id="KW-1185">Reference proteome</keyword>
<keyword id="KW-0694">RNA-binding</keyword>
<keyword id="KW-0804">Transcription</keyword>
<keyword id="KW-0805">Transcription regulation</keyword>
<evidence type="ECO:0000256" key="1">
    <source>
        <dbReference type="SAM" id="MobiDB-lite"/>
    </source>
</evidence>
<evidence type="ECO:0000269" key="2">
    <source>
    </source>
</evidence>
<evidence type="ECO:0000305" key="3"/>
<evidence type="ECO:0000312" key="4">
    <source>
        <dbReference type="MGI" id="MGI:2685208"/>
    </source>
</evidence>
<sequence>MAIEFGDHSSGFHHTEVIRFINNEVLKNGGSSEFYTTFRSRSWNEIEDQLRTILVDPKVPRSLKRACTWSALALSVRVAARQRQQQARRVWRLQDQVGEHESASWTLVSELQRLREERDQAAAQLLCTQIILQEAMDEREILRGRLLQAKRSALPVVPERGMEYGKTSLLSFEEKELGDLEFIGSQNMSHLEAQIPILSCLPGLSSPWVQAMDPFLQMTMAHPVPLKAKFSLEFSFSTPVPCPALMDSEATATAMITGLPQIAPSGIQPSSLCVTLESQETIASALDQICPRQKECSEILQDVSHLADSISCCEGEGPEKPQGTSLHGDSSNNSHKDNQAIPQIMAATEKKNLMMHQGTAAVEVNSNHSIKEEPVMPKGISSQGNKTSSTKKKRPKISRRVVGLIESISHNTQCVSVTPQETHTQVNKTTSTLKTYPGNLLRKPDQGKILSCNQKEDSKTLQRLTDLGEGTRNCQKEDTFQQTTCLNAGVSPNEKKMPQGTGKNQSQRQKEEPNSFQANHPRKCKSYLMNKYPKIQLATKQRVKQPEGIKSLESKQPQETKSSESKQQEKPLSHRTSANCICPSSKTVNRSWYKGCYKCAKTSA</sequence>
<reference key="1">
    <citation type="journal article" date="2009" name="PLoS Biol.">
        <title>Lineage-specific biology revealed by a finished genome assembly of the mouse.</title>
        <authorList>
            <person name="Church D.M."/>
            <person name="Goodstadt L."/>
            <person name="Hillier L.W."/>
            <person name="Zody M.C."/>
            <person name="Goldstein S."/>
            <person name="She X."/>
            <person name="Bult C.J."/>
            <person name="Agarwala R."/>
            <person name="Cherry J.L."/>
            <person name="DiCuccio M."/>
            <person name="Hlavina W."/>
            <person name="Kapustin Y."/>
            <person name="Meric P."/>
            <person name="Maglott D."/>
            <person name="Birtle Z."/>
            <person name="Marques A.C."/>
            <person name="Graves T."/>
            <person name="Zhou S."/>
            <person name="Teague B."/>
            <person name="Potamousis K."/>
            <person name="Churas C."/>
            <person name="Place M."/>
            <person name="Herschleb J."/>
            <person name="Runnheim R."/>
            <person name="Forrest D."/>
            <person name="Amos-Landgraf J."/>
            <person name="Schwartz D.C."/>
            <person name="Cheng Z."/>
            <person name="Lindblad-Toh K."/>
            <person name="Eichler E.E."/>
            <person name="Ponting C.P."/>
        </authorList>
    </citation>
    <scope>NUCLEOTIDE SEQUENCE [LARGE SCALE GENOMIC DNA]</scope>
    <source>
        <strain>C57BL/6J</strain>
    </source>
</reference>
<reference key="2">
    <citation type="journal article" date="2021" name="Mol. Biol. Rep.">
        <title>Analysis of mouse male germ cell-specific or -predominant Tex13 family genes encoding proteins with transcriptional repressor activity.</title>
        <authorList>
            <person name="Kim D."/>
            <person name="Hong S.H."/>
            <person name="Han G."/>
            <person name="Cho C."/>
        </authorList>
    </citation>
    <scope>FUNCTION</scope>
    <scope>DEVELOPMENTAL STAGE</scope>
</reference>
<comment type="function">
    <text evidence="2">Plays a role in transcriptional repression.</text>
</comment>
<comment type="developmental stage">
    <text evidence="2">Expressed from the meiotic and postmeiotic stages of spermatogenesis.</text>
</comment>
<comment type="similarity">
    <text>Belongs to the TEX13 family.</text>
</comment>
<feature type="chain" id="PRO_0000435875" description="Testis-expressed protein 13C-1">
    <location>
        <begin position="1"/>
        <end position="604"/>
    </location>
</feature>
<feature type="region of interest" description="Disordered" evidence="1">
    <location>
        <begin position="314"/>
        <end position="337"/>
    </location>
</feature>
<feature type="region of interest" description="Disordered" evidence="1">
    <location>
        <begin position="374"/>
        <end position="397"/>
    </location>
</feature>
<feature type="region of interest" description="Disordered" evidence="1">
    <location>
        <begin position="485"/>
        <end position="523"/>
    </location>
</feature>
<feature type="region of interest" description="Disordered" evidence="1">
    <location>
        <begin position="538"/>
        <end position="580"/>
    </location>
</feature>
<feature type="compositionally biased region" description="Polar residues" evidence="1">
    <location>
        <begin position="322"/>
        <end position="333"/>
    </location>
</feature>
<feature type="compositionally biased region" description="Basic and acidic residues" evidence="1">
    <location>
        <begin position="544"/>
        <end position="572"/>
    </location>
</feature>
<dbReference type="EMBL" id="AL671890">
    <property type="status" value="NOT_ANNOTATED_CDS"/>
    <property type="molecule type" value="Genomic_DNA"/>
</dbReference>
<dbReference type="CCDS" id="CCDS72373.1"/>
<dbReference type="RefSeq" id="NP_001182200.1">
    <property type="nucleotide sequence ID" value="NM_001195271.1"/>
</dbReference>
<dbReference type="SMR" id="D3YU32"/>
<dbReference type="STRING" id="10090.ENSMUSP00000100745"/>
<dbReference type="iPTMnet" id="D3YU32"/>
<dbReference type="PhosphoSitePlus" id="D3YU32"/>
<dbReference type="PaxDb" id="10090-ENSMUSP00000100745"/>
<dbReference type="Ensembl" id="ENSMUST00000105113.4">
    <property type="protein sequence ID" value="ENSMUSP00000100745.3"/>
    <property type="gene ID" value="ENSMUSG00000078320.5"/>
</dbReference>
<dbReference type="GeneID" id="637093"/>
<dbReference type="KEGG" id="mmu:637093"/>
<dbReference type="UCSC" id="uc012hgq.1">
    <property type="organism name" value="mouse"/>
</dbReference>
<dbReference type="AGR" id="MGI:2685208"/>
<dbReference type="CTD" id="637093"/>
<dbReference type="MGI" id="MGI:2685208">
    <property type="gene designation" value="Tex13c1"/>
</dbReference>
<dbReference type="VEuPathDB" id="HostDB:ENSMUSG00000078320"/>
<dbReference type="eggNOG" id="ENOG502QR8U">
    <property type="taxonomic scope" value="Eukaryota"/>
</dbReference>
<dbReference type="GeneTree" id="ENSGT00940000161768"/>
<dbReference type="HOGENOM" id="CLU_453131_0_0_1"/>
<dbReference type="InParanoid" id="D3YU32"/>
<dbReference type="OMA" id="VHQEMVP"/>
<dbReference type="OrthoDB" id="9527063at2759"/>
<dbReference type="PhylomeDB" id="D3YU32"/>
<dbReference type="TreeFam" id="TF337208"/>
<dbReference type="BioGRID-ORCS" id="637093">
    <property type="hits" value="0 hits in 62 CRISPR screens"/>
</dbReference>
<dbReference type="PRO" id="PR:D3YU32"/>
<dbReference type="Proteomes" id="UP000000589">
    <property type="component" value="Chromosome X"/>
</dbReference>
<dbReference type="RNAct" id="D3YU32">
    <property type="molecule type" value="protein"/>
</dbReference>
<dbReference type="Bgee" id="ENSMUSG00000078320">
    <property type="expression patterns" value="Expressed in testis and 3 other cell types or tissues"/>
</dbReference>
<dbReference type="InterPro" id="IPR028193">
    <property type="entry name" value="TEX13A-D_N"/>
</dbReference>
<dbReference type="PANTHER" id="PTHR23111:SF103">
    <property type="entry name" value="TEX13 FAMILY MEMBER C3-RELATED"/>
    <property type="match status" value="1"/>
</dbReference>
<dbReference type="PANTHER" id="PTHR23111">
    <property type="entry name" value="ZINC FINGER PROTEIN"/>
    <property type="match status" value="1"/>
</dbReference>
<dbReference type="Pfam" id="PF15186">
    <property type="entry name" value="TEX13"/>
    <property type="match status" value="1"/>
</dbReference>